<protein>
    <recommendedName>
        <fullName evidence="5">Eukaryotic translation initiation factor 4E-binding protein Mextli</fullName>
    </recommendedName>
</protein>
<dbReference type="EMBL" id="AE014134">
    <property type="protein sequence ID" value="AAF50972.1"/>
    <property type="molecule type" value="Genomic_DNA"/>
</dbReference>
<dbReference type="EMBL" id="AE014134">
    <property type="protein sequence ID" value="AAF50973.1"/>
    <property type="molecule type" value="Genomic_DNA"/>
</dbReference>
<dbReference type="EMBL" id="AE014134">
    <property type="protein sequence ID" value="AAN10338.1"/>
    <property type="molecule type" value="Genomic_DNA"/>
</dbReference>
<dbReference type="EMBL" id="AE014134">
    <property type="protein sequence ID" value="ACZ94165.1"/>
    <property type="molecule type" value="Genomic_DNA"/>
</dbReference>
<dbReference type="EMBL" id="AE014134">
    <property type="protein sequence ID" value="AGB92589.1"/>
    <property type="molecule type" value="Genomic_DNA"/>
</dbReference>
<dbReference type="EMBL" id="BT003302">
    <property type="protein sequence ID" value="AAO25062.1"/>
    <property type="molecule type" value="mRNA"/>
</dbReference>
<dbReference type="RefSeq" id="NP_001162874.1">
    <molecule id="Q9VR35-2"/>
    <property type="nucleotide sequence ID" value="NM_001169403.2"/>
</dbReference>
<dbReference type="RefSeq" id="NP_001260053.1">
    <molecule id="Q9VR35-1"/>
    <property type="nucleotide sequence ID" value="NM_001273124.1"/>
</dbReference>
<dbReference type="RefSeq" id="NP_608866.1">
    <molecule id="Q9VR35-1"/>
    <property type="nucleotide sequence ID" value="NM_135022.3"/>
</dbReference>
<dbReference type="RefSeq" id="NP_723015.1">
    <molecule id="Q9VR35-1"/>
    <property type="nucleotide sequence ID" value="NM_164598.2"/>
</dbReference>
<dbReference type="RefSeq" id="NP_723016.1">
    <molecule id="Q9VR35-1"/>
    <property type="nucleotide sequence ID" value="NM_164599.2"/>
</dbReference>
<dbReference type="PDB" id="5ABU">
    <property type="method" value="X-ray"/>
    <property type="resolution" value="2.16 A"/>
    <property type="chains" value="B=577-640"/>
</dbReference>
<dbReference type="PDB" id="5ABV">
    <property type="method" value="X-ray"/>
    <property type="resolution" value="2.13 A"/>
    <property type="chains" value="B/D/F/H=577-640"/>
</dbReference>
<dbReference type="PDBsum" id="5ABU"/>
<dbReference type="PDBsum" id="5ABV"/>
<dbReference type="SMR" id="Q9VR35"/>
<dbReference type="FunCoup" id="Q9VR35">
    <property type="interactions" value="14"/>
</dbReference>
<dbReference type="IntAct" id="Q9VR35">
    <property type="interactions" value="15"/>
</dbReference>
<dbReference type="STRING" id="7227.FBpp0290163"/>
<dbReference type="PaxDb" id="7227-FBpp0290163"/>
<dbReference type="DNASU" id="33686"/>
<dbReference type="EnsemblMetazoa" id="FBtr0077409">
    <molecule id="Q9VR35-1"/>
    <property type="protein sequence ID" value="FBpp0077100"/>
    <property type="gene ID" value="FBgn0031637"/>
</dbReference>
<dbReference type="EnsemblMetazoa" id="FBtr0077410">
    <molecule id="Q9VR35-1"/>
    <property type="protein sequence ID" value="FBpp0077101"/>
    <property type="gene ID" value="FBgn0031637"/>
</dbReference>
<dbReference type="EnsemblMetazoa" id="FBtr0077411">
    <molecule id="Q9VR35-1"/>
    <property type="protein sequence ID" value="FBpp0077102"/>
    <property type="gene ID" value="FBgn0031637"/>
</dbReference>
<dbReference type="EnsemblMetazoa" id="FBtr0300941">
    <molecule id="Q9VR35-2"/>
    <property type="protein sequence ID" value="FBpp0290163"/>
    <property type="gene ID" value="FBgn0031637"/>
</dbReference>
<dbReference type="EnsemblMetazoa" id="FBtr0332477">
    <molecule id="Q9VR35-1"/>
    <property type="protein sequence ID" value="FBpp0304753"/>
    <property type="gene ID" value="FBgn0031637"/>
</dbReference>
<dbReference type="GeneID" id="33686"/>
<dbReference type="KEGG" id="dme:Dmel_CG2950"/>
<dbReference type="UCSC" id="CG2950-RA">
    <molecule id="Q9VR35-1"/>
    <property type="organism name" value="d. melanogaster"/>
</dbReference>
<dbReference type="AGR" id="FB:FBgn0031637"/>
<dbReference type="CTD" id="33686"/>
<dbReference type="FlyBase" id="FBgn0031637">
    <property type="gene designation" value="mxt"/>
</dbReference>
<dbReference type="VEuPathDB" id="VectorBase:FBgn0031637"/>
<dbReference type="eggNOG" id="ENOG502QRYP">
    <property type="taxonomic scope" value="Eukaryota"/>
</dbReference>
<dbReference type="GeneTree" id="ENSGT00520000058221"/>
<dbReference type="HOGENOM" id="CLU_029657_0_0_1"/>
<dbReference type="InParanoid" id="Q9VR35"/>
<dbReference type="OMA" id="HAWALPT"/>
<dbReference type="OrthoDB" id="6357832at2759"/>
<dbReference type="PhylomeDB" id="Q9VR35"/>
<dbReference type="BioGRID-ORCS" id="33686">
    <property type="hits" value="0 hits in 1 CRISPR screen"/>
</dbReference>
<dbReference type="EvolutionaryTrace" id="Q9VR35"/>
<dbReference type="GenomeRNAi" id="33686"/>
<dbReference type="PRO" id="PR:Q9VR35"/>
<dbReference type="Proteomes" id="UP000000803">
    <property type="component" value="Chromosome 2L"/>
</dbReference>
<dbReference type="Bgee" id="FBgn0031637">
    <property type="expression patterns" value="Expressed in adult Malpighian tubule principal cell of lower segment in Malpighian tubule and 232 other cell types or tissues"/>
</dbReference>
<dbReference type="ExpressionAtlas" id="Q9VR35">
    <property type="expression patterns" value="baseline and differential"/>
</dbReference>
<dbReference type="GO" id="GO:0005737">
    <property type="term" value="C:cytoplasm"/>
    <property type="evidence" value="ECO:0000314"/>
    <property type="project" value="FlyBase"/>
</dbReference>
<dbReference type="GO" id="GO:0036464">
    <property type="term" value="C:cytoplasmic ribonucleoprotein granule"/>
    <property type="evidence" value="ECO:0007669"/>
    <property type="project" value="UniProtKB-SubCell"/>
</dbReference>
<dbReference type="GO" id="GO:0034518">
    <property type="term" value="C:RNA cap binding complex"/>
    <property type="evidence" value="ECO:0000315"/>
    <property type="project" value="FlyBase"/>
</dbReference>
<dbReference type="GO" id="GO:0008190">
    <property type="term" value="F:eukaryotic initiation factor 4E binding"/>
    <property type="evidence" value="ECO:0000353"/>
    <property type="project" value="FlyBase"/>
</dbReference>
<dbReference type="GO" id="GO:0003723">
    <property type="term" value="F:RNA binding"/>
    <property type="evidence" value="ECO:0007669"/>
    <property type="project" value="UniProtKB-KW"/>
</dbReference>
<dbReference type="GO" id="GO:0003743">
    <property type="term" value="F:translation initiation factor activity"/>
    <property type="evidence" value="ECO:0000315"/>
    <property type="project" value="FlyBase"/>
</dbReference>
<dbReference type="GO" id="GO:0036099">
    <property type="term" value="P:female germ-line stem cell population maintenance"/>
    <property type="evidence" value="ECO:0000315"/>
    <property type="project" value="FlyBase"/>
</dbReference>
<dbReference type="GO" id="GO:0045727">
    <property type="term" value="P:positive regulation of translation"/>
    <property type="evidence" value="ECO:0000315"/>
    <property type="project" value="FlyBase"/>
</dbReference>
<dbReference type="GO" id="GO:1901190">
    <property type="term" value="P:regulation of formation of translation initiation ternary complex"/>
    <property type="evidence" value="ECO:0000315"/>
    <property type="project" value="FlyBase"/>
</dbReference>
<dbReference type="CDD" id="cd22454">
    <property type="entry name" value="KH-I_Mextli_like"/>
    <property type="match status" value="1"/>
</dbReference>
<dbReference type="FunFam" id="1.25.40.180:FF:000048">
    <property type="entry name" value="Uncharacterized protein, isoform A"/>
    <property type="match status" value="1"/>
</dbReference>
<dbReference type="FunFam" id="3.30.1370.10:FF:000072">
    <property type="entry name" value="Uncharacterized protein, isoform A"/>
    <property type="match status" value="1"/>
</dbReference>
<dbReference type="Gene3D" id="1.25.40.180">
    <property type="match status" value="1"/>
</dbReference>
<dbReference type="Gene3D" id="3.30.1370.10">
    <property type="entry name" value="K Homology domain, type 1"/>
    <property type="match status" value="1"/>
</dbReference>
<dbReference type="InterPro" id="IPR004087">
    <property type="entry name" value="KH_dom"/>
</dbReference>
<dbReference type="InterPro" id="IPR004088">
    <property type="entry name" value="KH_dom_type_1"/>
</dbReference>
<dbReference type="InterPro" id="IPR036612">
    <property type="entry name" value="KH_dom_type_1_sf"/>
</dbReference>
<dbReference type="InterPro" id="IPR040160">
    <property type="entry name" value="Mxt"/>
</dbReference>
<dbReference type="PANTHER" id="PTHR20849">
    <property type="entry name" value="EUKARYOTIC TRANSLATION INITIATION FACTOR 4E-BINDING PROTEIN MEXTLI"/>
    <property type="match status" value="1"/>
</dbReference>
<dbReference type="PANTHER" id="PTHR20849:SF2">
    <property type="entry name" value="EUKARYOTIC TRANSLATION INITIATION FACTOR 4E-BINDING PROTEIN MEXTLI"/>
    <property type="match status" value="1"/>
</dbReference>
<dbReference type="Pfam" id="PF00013">
    <property type="entry name" value="KH_1"/>
    <property type="match status" value="1"/>
</dbReference>
<dbReference type="SMART" id="SM00322">
    <property type="entry name" value="KH"/>
    <property type="match status" value="1"/>
</dbReference>
<dbReference type="SUPFAM" id="SSF54791">
    <property type="entry name" value="Eukaryotic type KH-domain (KH-domain type I)"/>
    <property type="match status" value="1"/>
</dbReference>
<dbReference type="PROSITE" id="PS50084">
    <property type="entry name" value="KH_TYPE_1"/>
    <property type="match status" value="1"/>
</dbReference>
<name>MXT_DROME</name>
<evidence type="ECO:0000255" key="1">
    <source>
        <dbReference type="PROSITE-ProRule" id="PRU00117"/>
    </source>
</evidence>
<evidence type="ECO:0000256" key="2">
    <source>
        <dbReference type="SAM" id="MobiDB-lite"/>
    </source>
</evidence>
<evidence type="ECO:0000269" key="3">
    <source>
    </source>
</evidence>
<evidence type="ECO:0000269" key="4">
    <source>
    </source>
</evidence>
<evidence type="ECO:0000303" key="5">
    <source>
    </source>
</evidence>
<evidence type="ECO:0000305" key="6"/>
<evidence type="ECO:0000312" key="7">
    <source>
        <dbReference type="EMBL" id="AAO25062.1"/>
    </source>
</evidence>
<evidence type="ECO:0000312" key="8">
    <source>
        <dbReference type="FlyBase" id="FBgn0031637"/>
    </source>
</evidence>
<evidence type="ECO:0000312" key="9">
    <source>
        <dbReference type="Proteomes" id="UP000000803"/>
    </source>
</evidence>
<evidence type="ECO:0007744" key="10">
    <source>
        <dbReference type="PDB" id="5ABU"/>
    </source>
</evidence>
<evidence type="ECO:0007744" key="11">
    <source>
        <dbReference type="PDB" id="5ABV"/>
    </source>
</evidence>
<evidence type="ECO:0007829" key="12">
    <source>
        <dbReference type="PDB" id="5ABV"/>
    </source>
</evidence>
<accession>Q9VR35</accession>
<accession>E1JHT5</accession>
<keyword id="KW-0002">3D-structure</keyword>
<keyword id="KW-0025">Alternative splicing</keyword>
<keyword id="KW-0963">Cytoplasm</keyword>
<keyword id="KW-1185">Reference proteome</keyword>
<keyword id="KW-0694">RNA-binding</keyword>
<keyword id="KW-0810">Translation regulation</keyword>
<proteinExistence type="evidence at protein level"/>
<comment type="function">
    <text evidence="3">Plays a role in promoting translation.</text>
</comment>
<comment type="subunit">
    <text evidence="3 4">Interacts with eukaryotic translation initiation factor eIF4E1 (PubMed:23716590, PubMed:26294658). Also interacts with eukaryotic translation initiation factor 3 complex members eif3-S9/eif3b, Int6/eif3e and eIF-3p40/eif3h and with CG3225 (PubMed:23716590).</text>
</comment>
<comment type="interaction">
    <interactant intactId="EBI-151445">
        <id>Q9VR35</id>
    </interactant>
    <interactant intactId="EBI-113702">
        <id>Q9VL73</id>
        <label>Dmel\CG13124</label>
    </interactant>
    <organismsDiffer>false</organismsDiffer>
    <experiments>5</experiments>
</comment>
<comment type="subcellular location">
    <subcellularLocation>
        <location evidence="3">Cytoplasm</location>
    </subcellularLocation>
    <subcellularLocation>
        <location evidence="3">Cytoplasm</location>
        <location evidence="3">Cytoplasmic ribonucleoprotein granule</location>
    </subcellularLocation>
    <text evidence="3">In germ line cells, predominantly cytoplasmic (PubMed:23716590). Accumulates in the perinuclear meiotic nuage (also known as germline granule or P granule) during oogenesis but disappears from there around stage 8 (PubMed:23716590).</text>
</comment>
<comment type="alternative products">
    <event type="alternative splicing"/>
    <isoform>
        <id>Q9VR35-1</id>
        <name evidence="8">A</name>
        <name evidence="8">B</name>
        <name evidence="8">C</name>
        <name evidence="8">E</name>
        <sequence type="displayed"/>
    </isoform>
    <isoform>
        <id>Q9VR35-2</id>
        <name evidence="8">D</name>
        <sequence type="described" ref="VSP_058328"/>
    </isoform>
</comment>
<comment type="developmental stage">
    <text evidence="3">Expressed throughout oogenesis with particularly high levels in germ line stem cells and cystoblasts and decreasing levels in subsequent divisions. Around stage 8, remains detectable in nurse cells and oocytes and expression increases in follicle cells where it persists until late oogenesis, both in stretched cells and in columnar follicle cells (at protein level).</text>
</comment>
<comment type="domain">
    <text evidence="4">Binds to eIF4E1 using a novel tripartite interface in the C-terminal domain comprising a canonical helix which engages the eIF4E1 dorsal surface, a non-canonical helix which engages the eIF4E1 lateral surface and an auxiliary helix that lies anti-parallel to the canonical helix on the eIF4E1 dorsal surface. The tripartite binding mode compromises its ability to compete with eIF4G1 for binding to eIF4E1 but once bound, the complex is very stable and is resistant to competition by eIF4G1.</text>
</comment>
<comment type="disruption phenotype">
    <text evidence="3">Mutants are viable and fertile but 14-21% of embryos fail to hatch, displaying variable segmentation defects affecting anterior-posterior patterning. Mutant ovaries are generally smaller with fewer late-stage oocytes than controls and females lay fewer eggs. Reduced cap-dependent translation.</text>
</comment>
<comment type="miscellaneous">
    <text evidence="5">The name 'Mextli' derives from the Aztec god of storms and war.</text>
</comment>
<reference evidence="9" key="1">
    <citation type="journal article" date="2000" name="Science">
        <title>The genome sequence of Drosophila melanogaster.</title>
        <authorList>
            <person name="Adams M.D."/>
            <person name="Celniker S.E."/>
            <person name="Holt R.A."/>
            <person name="Evans C.A."/>
            <person name="Gocayne J.D."/>
            <person name="Amanatides P.G."/>
            <person name="Scherer S.E."/>
            <person name="Li P.W."/>
            <person name="Hoskins R.A."/>
            <person name="Galle R.F."/>
            <person name="George R.A."/>
            <person name="Lewis S.E."/>
            <person name="Richards S."/>
            <person name="Ashburner M."/>
            <person name="Henderson S.N."/>
            <person name="Sutton G.G."/>
            <person name="Wortman J.R."/>
            <person name="Yandell M.D."/>
            <person name="Zhang Q."/>
            <person name="Chen L.X."/>
            <person name="Brandon R.C."/>
            <person name="Rogers Y.-H.C."/>
            <person name="Blazej R.G."/>
            <person name="Champe M."/>
            <person name="Pfeiffer B.D."/>
            <person name="Wan K.H."/>
            <person name="Doyle C."/>
            <person name="Baxter E.G."/>
            <person name="Helt G."/>
            <person name="Nelson C.R."/>
            <person name="Miklos G.L.G."/>
            <person name="Abril J.F."/>
            <person name="Agbayani A."/>
            <person name="An H.-J."/>
            <person name="Andrews-Pfannkoch C."/>
            <person name="Baldwin D."/>
            <person name="Ballew R.M."/>
            <person name="Basu A."/>
            <person name="Baxendale J."/>
            <person name="Bayraktaroglu L."/>
            <person name="Beasley E.M."/>
            <person name="Beeson K.Y."/>
            <person name="Benos P.V."/>
            <person name="Berman B.P."/>
            <person name="Bhandari D."/>
            <person name="Bolshakov S."/>
            <person name="Borkova D."/>
            <person name="Botchan M.R."/>
            <person name="Bouck J."/>
            <person name="Brokstein P."/>
            <person name="Brottier P."/>
            <person name="Burtis K.C."/>
            <person name="Busam D.A."/>
            <person name="Butler H."/>
            <person name="Cadieu E."/>
            <person name="Center A."/>
            <person name="Chandra I."/>
            <person name="Cherry J.M."/>
            <person name="Cawley S."/>
            <person name="Dahlke C."/>
            <person name="Davenport L.B."/>
            <person name="Davies P."/>
            <person name="de Pablos B."/>
            <person name="Delcher A."/>
            <person name="Deng Z."/>
            <person name="Mays A.D."/>
            <person name="Dew I."/>
            <person name="Dietz S.M."/>
            <person name="Dodson K."/>
            <person name="Doup L.E."/>
            <person name="Downes M."/>
            <person name="Dugan-Rocha S."/>
            <person name="Dunkov B.C."/>
            <person name="Dunn P."/>
            <person name="Durbin K.J."/>
            <person name="Evangelista C.C."/>
            <person name="Ferraz C."/>
            <person name="Ferriera S."/>
            <person name="Fleischmann W."/>
            <person name="Fosler C."/>
            <person name="Gabrielian A.E."/>
            <person name="Garg N.S."/>
            <person name="Gelbart W.M."/>
            <person name="Glasser K."/>
            <person name="Glodek A."/>
            <person name="Gong F."/>
            <person name="Gorrell J.H."/>
            <person name="Gu Z."/>
            <person name="Guan P."/>
            <person name="Harris M."/>
            <person name="Harris N.L."/>
            <person name="Harvey D.A."/>
            <person name="Heiman T.J."/>
            <person name="Hernandez J.R."/>
            <person name="Houck J."/>
            <person name="Hostin D."/>
            <person name="Houston K.A."/>
            <person name="Howland T.J."/>
            <person name="Wei M.-H."/>
            <person name="Ibegwam C."/>
            <person name="Jalali M."/>
            <person name="Kalush F."/>
            <person name="Karpen G.H."/>
            <person name="Ke Z."/>
            <person name="Kennison J.A."/>
            <person name="Ketchum K.A."/>
            <person name="Kimmel B.E."/>
            <person name="Kodira C.D."/>
            <person name="Kraft C.L."/>
            <person name="Kravitz S."/>
            <person name="Kulp D."/>
            <person name="Lai Z."/>
            <person name="Lasko P."/>
            <person name="Lei Y."/>
            <person name="Levitsky A.A."/>
            <person name="Li J.H."/>
            <person name="Li Z."/>
            <person name="Liang Y."/>
            <person name="Lin X."/>
            <person name="Liu X."/>
            <person name="Mattei B."/>
            <person name="McIntosh T.C."/>
            <person name="McLeod M.P."/>
            <person name="McPherson D."/>
            <person name="Merkulov G."/>
            <person name="Milshina N.V."/>
            <person name="Mobarry C."/>
            <person name="Morris J."/>
            <person name="Moshrefi A."/>
            <person name="Mount S.M."/>
            <person name="Moy M."/>
            <person name="Murphy B."/>
            <person name="Murphy L."/>
            <person name="Muzny D.M."/>
            <person name="Nelson D.L."/>
            <person name="Nelson D.R."/>
            <person name="Nelson K.A."/>
            <person name="Nixon K."/>
            <person name="Nusskern D.R."/>
            <person name="Pacleb J.M."/>
            <person name="Palazzolo M."/>
            <person name="Pittman G.S."/>
            <person name="Pan S."/>
            <person name="Pollard J."/>
            <person name="Puri V."/>
            <person name="Reese M.G."/>
            <person name="Reinert K."/>
            <person name="Remington K."/>
            <person name="Saunders R.D.C."/>
            <person name="Scheeler F."/>
            <person name="Shen H."/>
            <person name="Shue B.C."/>
            <person name="Siden-Kiamos I."/>
            <person name="Simpson M."/>
            <person name="Skupski M.P."/>
            <person name="Smith T.J."/>
            <person name="Spier E."/>
            <person name="Spradling A.C."/>
            <person name="Stapleton M."/>
            <person name="Strong R."/>
            <person name="Sun E."/>
            <person name="Svirskas R."/>
            <person name="Tector C."/>
            <person name="Turner R."/>
            <person name="Venter E."/>
            <person name="Wang A.H."/>
            <person name="Wang X."/>
            <person name="Wang Z.-Y."/>
            <person name="Wassarman D.A."/>
            <person name="Weinstock G.M."/>
            <person name="Weissenbach J."/>
            <person name="Williams S.M."/>
            <person name="Woodage T."/>
            <person name="Worley K.C."/>
            <person name="Wu D."/>
            <person name="Yang S."/>
            <person name="Yao Q.A."/>
            <person name="Ye J."/>
            <person name="Yeh R.-F."/>
            <person name="Zaveri J.S."/>
            <person name="Zhan M."/>
            <person name="Zhang G."/>
            <person name="Zhao Q."/>
            <person name="Zheng L."/>
            <person name="Zheng X.H."/>
            <person name="Zhong F.N."/>
            <person name="Zhong W."/>
            <person name="Zhou X."/>
            <person name="Zhu S.C."/>
            <person name="Zhu X."/>
            <person name="Smith H.O."/>
            <person name="Gibbs R.A."/>
            <person name="Myers E.W."/>
            <person name="Rubin G.M."/>
            <person name="Venter J.C."/>
        </authorList>
    </citation>
    <scope>NUCLEOTIDE SEQUENCE [LARGE SCALE GENOMIC DNA]</scope>
    <source>
        <strain evidence="9">Berkeley</strain>
    </source>
</reference>
<reference evidence="9" key="2">
    <citation type="journal article" date="2002" name="Genome Biol.">
        <title>Annotation of the Drosophila melanogaster euchromatic genome: a systematic review.</title>
        <authorList>
            <person name="Misra S."/>
            <person name="Crosby M.A."/>
            <person name="Mungall C.J."/>
            <person name="Matthews B.B."/>
            <person name="Campbell K.S."/>
            <person name="Hradecky P."/>
            <person name="Huang Y."/>
            <person name="Kaminker J.S."/>
            <person name="Millburn G.H."/>
            <person name="Prochnik S.E."/>
            <person name="Smith C.D."/>
            <person name="Tupy J.L."/>
            <person name="Whitfield E.J."/>
            <person name="Bayraktaroglu L."/>
            <person name="Berman B.P."/>
            <person name="Bettencourt B.R."/>
            <person name="Celniker S.E."/>
            <person name="de Grey A.D.N.J."/>
            <person name="Drysdale R.A."/>
            <person name="Harris N.L."/>
            <person name="Richter J."/>
            <person name="Russo S."/>
            <person name="Schroeder A.J."/>
            <person name="Shu S.Q."/>
            <person name="Stapleton M."/>
            <person name="Yamada C."/>
            <person name="Ashburner M."/>
            <person name="Gelbart W.M."/>
            <person name="Rubin G.M."/>
            <person name="Lewis S.E."/>
        </authorList>
    </citation>
    <scope>GENOME REANNOTATION</scope>
    <source>
        <strain evidence="9">Berkeley</strain>
    </source>
</reference>
<reference evidence="7" key="3">
    <citation type="submission" date="2003-01" db="EMBL/GenBank/DDBJ databases">
        <authorList>
            <person name="Stapleton M."/>
            <person name="Brokstein P."/>
            <person name="Hong L."/>
            <person name="Agbayani A."/>
            <person name="Carlson J."/>
            <person name="Champe M."/>
            <person name="Chavez C."/>
            <person name="Dorsett V."/>
            <person name="Dresnek D."/>
            <person name="Farfan D."/>
            <person name="Frise E."/>
            <person name="George R."/>
            <person name="Gonzalez M."/>
            <person name="Guarin H."/>
            <person name="Kronmiller B."/>
            <person name="Li P."/>
            <person name="Liao G."/>
            <person name="Miranda A."/>
            <person name="Mungall C.J."/>
            <person name="Nunoo J."/>
            <person name="Pacleb J."/>
            <person name="Paragas V."/>
            <person name="Park S."/>
            <person name="Patel S."/>
            <person name="Phouanenavong S."/>
            <person name="Wan K."/>
            <person name="Yu C."/>
            <person name="Lewis S.E."/>
            <person name="Rubin G.M."/>
            <person name="Celniker S."/>
        </authorList>
    </citation>
    <scope>NUCLEOTIDE SEQUENCE [LARGE SCALE MRNA]</scope>
    <source>
        <strain evidence="7">Berkeley</strain>
        <tissue evidence="7">Head</tissue>
    </source>
</reference>
<reference evidence="6" key="4">
    <citation type="journal article" date="2013" name="Mol. Cell. Biol.">
        <title>Mextli is a novel eukaryotic translation initiation factor 4E-binding protein that promotes translation in Drosophila melanogaster.</title>
        <authorList>
            <person name="Hernandez G."/>
            <person name="Miron M."/>
            <person name="Han H."/>
            <person name="Liu N."/>
            <person name="Magescas J."/>
            <person name="Tettweiler G."/>
            <person name="Frank F."/>
            <person name="Siddiqui N."/>
            <person name="Sonenberg N."/>
            <person name="Lasko P."/>
        </authorList>
    </citation>
    <scope>FUNCTION</scope>
    <scope>INTERACTION WITH EIF-4E; EIF3-S9; EIF-3P40; INT6 AND CG3225</scope>
    <scope>SUBCELLULAR LOCATION</scope>
    <scope>DEVELOPMENTAL STAGE</scope>
    <scope>DISRUPTION PHENOTYPE</scope>
</reference>
<reference evidence="10 11" key="5">
    <citation type="journal article" date="2015" name="Genes Dev.">
        <title>Mextli proteins use both canonical bipartite and novel tripartite binding modes to form eIF4E complexes that display differential sensitivity to 4E-BP regulation.</title>
        <authorList>
            <person name="Peter D."/>
            <person name="Weber R."/>
            <person name="Kone C."/>
            <person name="Chung M.Y."/>
            <person name="Ebertsch L."/>
            <person name="Truffault V."/>
            <person name="Weichenrieder O."/>
            <person name="Igreja C."/>
            <person name="Izaurralde E."/>
        </authorList>
    </citation>
    <scope>X-RAY CRYSTALLOGRAPHY (2.13 ANGSTROMS) OF 577-640 IN COMPLEX WITH EIF-4E</scope>
    <scope>INTERACTION WITH EIF-4E</scope>
    <scope>DOMAIN</scope>
    <scope>MUTAGENESIS OF TYR-581; 586-LEU-LEU-587; LEU-598; TRP-602 AND MET-605</scope>
</reference>
<organism evidence="9">
    <name type="scientific">Drosophila melanogaster</name>
    <name type="common">Fruit fly</name>
    <dbReference type="NCBI Taxonomy" id="7227"/>
    <lineage>
        <taxon>Eukaryota</taxon>
        <taxon>Metazoa</taxon>
        <taxon>Ecdysozoa</taxon>
        <taxon>Arthropoda</taxon>
        <taxon>Hexapoda</taxon>
        <taxon>Insecta</taxon>
        <taxon>Pterygota</taxon>
        <taxon>Neoptera</taxon>
        <taxon>Endopterygota</taxon>
        <taxon>Diptera</taxon>
        <taxon>Brachycera</taxon>
        <taxon>Muscomorpha</taxon>
        <taxon>Ephydroidea</taxon>
        <taxon>Drosophilidae</taxon>
        <taxon>Drosophila</taxon>
        <taxon>Sophophora</taxon>
    </lineage>
</organism>
<gene>
    <name evidence="8" type="primary">mxt</name>
    <name evidence="8" type="ORF">CG2950</name>
</gene>
<sequence length="653" mass="70148">MAHTHLGRAVKNIEAPRPLKTQSRSSLKNSYLVIEELIQLIDNVTVGLQSCNTTPESITLLLHNLRVHGPQLEAVSKDTLDRAFVVFRNASQDERLNITTRLKLLELIELRAKSWDNDDTIAYYKSKQQISNVELPSEYQYDAGVQPGAFSTSPTFGVSGGVGGVNDGAAAAAAAVFNAASAAAAAQAAAIAAVGTSNQQHMLLPPGEVIRNSGKFPKPTKIPGKTYCKDEVVIRNADSGKVMGIKGRRVHMIEELSETIISFQRVNPGAKERLVQITGPAEDKINYAKQLMEDTIRRNASPVRLEPAPAVGGSCSSLNSSNSDDAIVQPRTPTGSSLANRLSFNSAQNFMTATAAAQQISQQMHHQTHHLQHQQQQQVAAVAAAAAAAAHAQATAAAGKVLRPNQQLLMHSYSTNDASVGEYKFTVNVGQHLIKITGDCCELVRVAKLVLDDYFSSSEFLASIEAGAAFDGTSLVTTPSTPLPGAGPPQFWLPGTDSGIGLNCVVSSSANNNGEGDDEVFAEPSNGGSSTSNQNGLARSRRSHFSRKESTPETKGAREKGDLDDLAGTNSLKSNASRVSYDIEHLLYYSMSPHSWTLPTDWQKMQETAPSILRNKDLQDESQRFDGDKYLASIKTAAKRDIVAADEVETLDE</sequence>
<feature type="chain" id="PRO_0000436263" description="Eukaryotic translation initiation factor 4E-binding protein Mextli" evidence="6">
    <location>
        <begin position="1"/>
        <end position="653"/>
    </location>
</feature>
<feature type="domain" description="KH" evidence="1">
    <location>
        <begin position="227"/>
        <end position="292"/>
    </location>
</feature>
<feature type="region of interest" description="Disordered" evidence="2">
    <location>
        <begin position="311"/>
        <end position="335"/>
    </location>
</feature>
<feature type="region of interest" description="Disordered" evidence="2">
    <location>
        <begin position="515"/>
        <end position="570"/>
    </location>
</feature>
<feature type="compositionally biased region" description="Low complexity" evidence="2">
    <location>
        <begin position="314"/>
        <end position="323"/>
    </location>
</feature>
<feature type="compositionally biased region" description="Low complexity" evidence="2">
    <location>
        <begin position="525"/>
        <end position="536"/>
    </location>
</feature>
<feature type="compositionally biased region" description="Basic and acidic residues" evidence="2">
    <location>
        <begin position="546"/>
        <end position="563"/>
    </location>
</feature>
<feature type="splice variant" id="VSP_058328" description="In isoform D." evidence="6">
    <original>DLQDESQRFDGDKYLASIKTAAKRDIVAADEVETLDE</original>
    <variation>VISPFDGSLGRTAYSSNIPDAIIASAPNSSVITHPWALNAITSSPNTNIISTAVGLAAVDASADNNPLTVTNKQSKGIFAERENRRLPKTSAVSDRNLYNKQLQIITNTVGQSVATQGKHRQSSYQTSQVKAIFQRYCEDDEFSLALCETESNNNRVYV</variation>
    <location>
        <begin position="617"/>
        <end position="653"/>
    </location>
</feature>
<feature type="mutagenesis site" description="Abolishes interaction with eIF4E1; when associated with 586-A-A-587." evidence="4">
    <original>Y</original>
    <variation>A</variation>
    <location>
        <position position="581"/>
    </location>
</feature>
<feature type="mutagenesis site" description="Abolishes interaction with eIF4E1; when associated with A-581." evidence="4">
    <original>LL</original>
    <variation>AA</variation>
    <location>
        <begin position="586"/>
        <end position="587"/>
    </location>
</feature>
<feature type="mutagenesis site" description="Abolishes interaction with eIF4E1." evidence="4">
    <original>L</original>
    <variation>D</variation>
    <location>
        <position position="598"/>
    </location>
</feature>
<feature type="mutagenesis site" description="Abolishes interaction with eIF4E1." evidence="4">
    <original>W</original>
    <variation>D</variation>
    <location>
        <position position="602"/>
    </location>
</feature>
<feature type="mutagenesis site" description="Abolishes interaction with eIF4E1." evidence="4">
    <original>M</original>
    <variation>D</variation>
    <location>
        <position position="605"/>
    </location>
</feature>
<feature type="helix" evidence="12">
    <location>
        <begin position="583"/>
        <end position="589"/>
    </location>
</feature>
<feature type="helix" evidence="12">
    <location>
        <begin position="593"/>
        <end position="595"/>
    </location>
</feature>
<feature type="helix" evidence="12">
    <location>
        <begin position="602"/>
        <end position="608"/>
    </location>
</feature>
<feature type="helix" evidence="12">
    <location>
        <begin position="610"/>
        <end position="612"/>
    </location>
</feature>
<feature type="helix" evidence="12">
    <location>
        <begin position="627"/>
        <end position="636"/>
    </location>
</feature>